<protein>
    <recommendedName>
        <fullName evidence="1">Peptidyl-tRNA hydrolase</fullName>
        <shortName evidence="1">Pth</shortName>
        <ecNumber evidence="1">3.1.1.29</ecNumber>
    </recommendedName>
</protein>
<name>PTH_BURMS</name>
<sequence>MIKLIVGLGNPGAEYTATRHNAGFWLVDQLAREAGATLRDERRFHGFYAKARLFGEEVHLLEPQTYMNRSGQAVVALAHFFKILPTEILVAHDELDLPPGAAKLKLGSGSGGHNGLKDISAHLSSQQYWRLRIGIGHPRDLIPESARAGAKPDVANFVLKPPRKDEQDLIDAAIERALAVMPTAIKGETERAMMQLHRNGA</sequence>
<accession>A1UZN8</accession>
<feature type="chain" id="PRO_1000010573" description="Peptidyl-tRNA hydrolase">
    <location>
        <begin position="1"/>
        <end position="201"/>
    </location>
</feature>
<feature type="active site" description="Proton acceptor" evidence="1">
    <location>
        <position position="20"/>
    </location>
</feature>
<feature type="binding site" evidence="1">
    <location>
        <position position="15"/>
    </location>
    <ligand>
        <name>tRNA</name>
        <dbReference type="ChEBI" id="CHEBI:17843"/>
    </ligand>
</feature>
<feature type="binding site" evidence="1">
    <location>
        <position position="66"/>
    </location>
    <ligand>
        <name>tRNA</name>
        <dbReference type="ChEBI" id="CHEBI:17843"/>
    </ligand>
</feature>
<feature type="binding site" evidence="1">
    <location>
        <position position="68"/>
    </location>
    <ligand>
        <name>tRNA</name>
        <dbReference type="ChEBI" id="CHEBI:17843"/>
    </ligand>
</feature>
<feature type="binding site" evidence="1">
    <location>
        <position position="114"/>
    </location>
    <ligand>
        <name>tRNA</name>
        <dbReference type="ChEBI" id="CHEBI:17843"/>
    </ligand>
</feature>
<feature type="site" description="Discriminates between blocked and unblocked aminoacyl-tRNA" evidence="1">
    <location>
        <position position="10"/>
    </location>
</feature>
<feature type="site" description="Stabilizes the basic form of H active site to accept a proton" evidence="1">
    <location>
        <position position="93"/>
    </location>
</feature>
<keyword id="KW-0963">Cytoplasm</keyword>
<keyword id="KW-0378">Hydrolase</keyword>
<keyword id="KW-0694">RNA-binding</keyword>
<keyword id="KW-0820">tRNA-binding</keyword>
<comment type="function">
    <text evidence="1">Hydrolyzes ribosome-free peptidyl-tRNAs (with 1 or more amino acids incorporated), which drop off the ribosome during protein synthesis, or as a result of ribosome stalling.</text>
</comment>
<comment type="function">
    <text evidence="1">Catalyzes the release of premature peptidyl moieties from peptidyl-tRNA molecules trapped in stalled 50S ribosomal subunits, and thus maintains levels of free tRNAs and 50S ribosomes.</text>
</comment>
<comment type="catalytic activity">
    <reaction evidence="1">
        <text>an N-acyl-L-alpha-aminoacyl-tRNA + H2O = an N-acyl-L-amino acid + a tRNA + H(+)</text>
        <dbReference type="Rhea" id="RHEA:54448"/>
        <dbReference type="Rhea" id="RHEA-COMP:10123"/>
        <dbReference type="Rhea" id="RHEA-COMP:13883"/>
        <dbReference type="ChEBI" id="CHEBI:15377"/>
        <dbReference type="ChEBI" id="CHEBI:15378"/>
        <dbReference type="ChEBI" id="CHEBI:59874"/>
        <dbReference type="ChEBI" id="CHEBI:78442"/>
        <dbReference type="ChEBI" id="CHEBI:138191"/>
        <dbReference type="EC" id="3.1.1.29"/>
    </reaction>
</comment>
<comment type="subunit">
    <text evidence="1">Monomer.</text>
</comment>
<comment type="subcellular location">
    <subcellularLocation>
        <location evidence="1">Cytoplasm</location>
    </subcellularLocation>
</comment>
<comment type="similarity">
    <text evidence="1">Belongs to the PTH family.</text>
</comment>
<evidence type="ECO:0000255" key="1">
    <source>
        <dbReference type="HAMAP-Rule" id="MF_00083"/>
    </source>
</evidence>
<proteinExistence type="inferred from homology"/>
<gene>
    <name evidence="1" type="primary">pth</name>
    <name type="ordered locus">BMASAVP1_A0090</name>
</gene>
<reference key="1">
    <citation type="journal article" date="2010" name="Genome Biol. Evol.">
        <title>Continuing evolution of Burkholderia mallei through genome reduction and large-scale rearrangements.</title>
        <authorList>
            <person name="Losada L."/>
            <person name="Ronning C.M."/>
            <person name="DeShazer D."/>
            <person name="Woods D."/>
            <person name="Fedorova N."/>
            <person name="Kim H.S."/>
            <person name="Shabalina S.A."/>
            <person name="Pearson T.R."/>
            <person name="Brinkac L."/>
            <person name="Tan P."/>
            <person name="Nandi T."/>
            <person name="Crabtree J."/>
            <person name="Badger J."/>
            <person name="Beckstrom-Sternberg S."/>
            <person name="Saqib M."/>
            <person name="Schutzer S.E."/>
            <person name="Keim P."/>
            <person name="Nierman W.C."/>
        </authorList>
    </citation>
    <scope>NUCLEOTIDE SEQUENCE [LARGE SCALE GENOMIC DNA]</scope>
    <source>
        <strain>SAVP1</strain>
    </source>
</reference>
<dbReference type="EC" id="3.1.1.29" evidence="1"/>
<dbReference type="EMBL" id="CP000526">
    <property type="protein sequence ID" value="ABM52552.1"/>
    <property type="molecule type" value="Genomic_DNA"/>
</dbReference>
<dbReference type="RefSeq" id="WP_004185241.1">
    <property type="nucleotide sequence ID" value="NC_008785.1"/>
</dbReference>
<dbReference type="SMR" id="A1UZN8"/>
<dbReference type="GeneID" id="92980788"/>
<dbReference type="KEGG" id="bmv:BMASAVP1_A0090"/>
<dbReference type="HOGENOM" id="CLU_062456_3_1_4"/>
<dbReference type="GO" id="GO:0005737">
    <property type="term" value="C:cytoplasm"/>
    <property type="evidence" value="ECO:0007669"/>
    <property type="project" value="UniProtKB-SubCell"/>
</dbReference>
<dbReference type="GO" id="GO:0004045">
    <property type="term" value="F:peptidyl-tRNA hydrolase activity"/>
    <property type="evidence" value="ECO:0007669"/>
    <property type="project" value="UniProtKB-UniRule"/>
</dbReference>
<dbReference type="GO" id="GO:0000049">
    <property type="term" value="F:tRNA binding"/>
    <property type="evidence" value="ECO:0007669"/>
    <property type="project" value="UniProtKB-UniRule"/>
</dbReference>
<dbReference type="GO" id="GO:0006515">
    <property type="term" value="P:protein quality control for misfolded or incompletely synthesized proteins"/>
    <property type="evidence" value="ECO:0007669"/>
    <property type="project" value="UniProtKB-UniRule"/>
</dbReference>
<dbReference type="GO" id="GO:0072344">
    <property type="term" value="P:rescue of stalled ribosome"/>
    <property type="evidence" value="ECO:0007669"/>
    <property type="project" value="UniProtKB-UniRule"/>
</dbReference>
<dbReference type="CDD" id="cd00462">
    <property type="entry name" value="PTH"/>
    <property type="match status" value="1"/>
</dbReference>
<dbReference type="FunFam" id="3.40.50.1470:FF:000001">
    <property type="entry name" value="Peptidyl-tRNA hydrolase"/>
    <property type="match status" value="1"/>
</dbReference>
<dbReference type="Gene3D" id="3.40.50.1470">
    <property type="entry name" value="Peptidyl-tRNA hydrolase"/>
    <property type="match status" value="1"/>
</dbReference>
<dbReference type="HAMAP" id="MF_00083">
    <property type="entry name" value="Pept_tRNA_hydro_bact"/>
    <property type="match status" value="1"/>
</dbReference>
<dbReference type="InterPro" id="IPR001328">
    <property type="entry name" value="Pept_tRNA_hydro"/>
</dbReference>
<dbReference type="InterPro" id="IPR018171">
    <property type="entry name" value="Pept_tRNA_hydro_CS"/>
</dbReference>
<dbReference type="InterPro" id="IPR036416">
    <property type="entry name" value="Pept_tRNA_hydro_sf"/>
</dbReference>
<dbReference type="NCBIfam" id="TIGR00447">
    <property type="entry name" value="pth"/>
    <property type="match status" value="1"/>
</dbReference>
<dbReference type="PANTHER" id="PTHR17224">
    <property type="entry name" value="PEPTIDYL-TRNA HYDROLASE"/>
    <property type="match status" value="1"/>
</dbReference>
<dbReference type="PANTHER" id="PTHR17224:SF1">
    <property type="entry name" value="PEPTIDYL-TRNA HYDROLASE"/>
    <property type="match status" value="1"/>
</dbReference>
<dbReference type="Pfam" id="PF01195">
    <property type="entry name" value="Pept_tRNA_hydro"/>
    <property type="match status" value="1"/>
</dbReference>
<dbReference type="SUPFAM" id="SSF53178">
    <property type="entry name" value="Peptidyl-tRNA hydrolase-like"/>
    <property type="match status" value="1"/>
</dbReference>
<dbReference type="PROSITE" id="PS01195">
    <property type="entry name" value="PEPT_TRNA_HYDROL_1"/>
    <property type="match status" value="1"/>
</dbReference>
<dbReference type="PROSITE" id="PS01196">
    <property type="entry name" value="PEPT_TRNA_HYDROL_2"/>
    <property type="match status" value="1"/>
</dbReference>
<organism>
    <name type="scientific">Burkholderia mallei (strain SAVP1)</name>
    <dbReference type="NCBI Taxonomy" id="320388"/>
    <lineage>
        <taxon>Bacteria</taxon>
        <taxon>Pseudomonadati</taxon>
        <taxon>Pseudomonadota</taxon>
        <taxon>Betaproteobacteria</taxon>
        <taxon>Burkholderiales</taxon>
        <taxon>Burkholderiaceae</taxon>
        <taxon>Burkholderia</taxon>
        <taxon>pseudomallei group</taxon>
    </lineage>
</organism>